<gene>
    <name evidence="1" type="primary">rplE</name>
    <name type="ordered locus">NMC0144</name>
</gene>
<dbReference type="EMBL" id="AM421808">
    <property type="protein sequence ID" value="CAM09463.1"/>
    <property type="molecule type" value="Genomic_DNA"/>
</dbReference>
<dbReference type="RefSeq" id="WP_002215436.1">
    <property type="nucleotide sequence ID" value="NC_008767.1"/>
</dbReference>
<dbReference type="SMR" id="A1KRI5"/>
<dbReference type="KEGG" id="nmc:NMC0144"/>
<dbReference type="HOGENOM" id="CLU_061015_2_1_4"/>
<dbReference type="Proteomes" id="UP000002286">
    <property type="component" value="Chromosome"/>
</dbReference>
<dbReference type="GO" id="GO:1990904">
    <property type="term" value="C:ribonucleoprotein complex"/>
    <property type="evidence" value="ECO:0007669"/>
    <property type="project" value="UniProtKB-KW"/>
</dbReference>
<dbReference type="GO" id="GO:0005840">
    <property type="term" value="C:ribosome"/>
    <property type="evidence" value="ECO:0007669"/>
    <property type="project" value="UniProtKB-KW"/>
</dbReference>
<dbReference type="GO" id="GO:0019843">
    <property type="term" value="F:rRNA binding"/>
    <property type="evidence" value="ECO:0007669"/>
    <property type="project" value="UniProtKB-UniRule"/>
</dbReference>
<dbReference type="GO" id="GO:0003735">
    <property type="term" value="F:structural constituent of ribosome"/>
    <property type="evidence" value="ECO:0007669"/>
    <property type="project" value="InterPro"/>
</dbReference>
<dbReference type="GO" id="GO:0000049">
    <property type="term" value="F:tRNA binding"/>
    <property type="evidence" value="ECO:0007669"/>
    <property type="project" value="UniProtKB-UniRule"/>
</dbReference>
<dbReference type="GO" id="GO:0006412">
    <property type="term" value="P:translation"/>
    <property type="evidence" value="ECO:0007669"/>
    <property type="project" value="UniProtKB-UniRule"/>
</dbReference>
<dbReference type="FunFam" id="3.30.1440.10:FF:000001">
    <property type="entry name" value="50S ribosomal protein L5"/>
    <property type="match status" value="1"/>
</dbReference>
<dbReference type="Gene3D" id="3.30.1440.10">
    <property type="match status" value="1"/>
</dbReference>
<dbReference type="HAMAP" id="MF_01333_B">
    <property type="entry name" value="Ribosomal_uL5_B"/>
    <property type="match status" value="1"/>
</dbReference>
<dbReference type="InterPro" id="IPR002132">
    <property type="entry name" value="Ribosomal_uL5"/>
</dbReference>
<dbReference type="InterPro" id="IPR020930">
    <property type="entry name" value="Ribosomal_uL5_bac-type"/>
</dbReference>
<dbReference type="InterPro" id="IPR031309">
    <property type="entry name" value="Ribosomal_uL5_C"/>
</dbReference>
<dbReference type="InterPro" id="IPR020929">
    <property type="entry name" value="Ribosomal_uL5_CS"/>
</dbReference>
<dbReference type="InterPro" id="IPR022803">
    <property type="entry name" value="Ribosomal_uL5_dom_sf"/>
</dbReference>
<dbReference type="InterPro" id="IPR031310">
    <property type="entry name" value="Ribosomal_uL5_N"/>
</dbReference>
<dbReference type="NCBIfam" id="NF000585">
    <property type="entry name" value="PRK00010.1"/>
    <property type="match status" value="1"/>
</dbReference>
<dbReference type="PANTHER" id="PTHR11994">
    <property type="entry name" value="60S RIBOSOMAL PROTEIN L11-RELATED"/>
    <property type="match status" value="1"/>
</dbReference>
<dbReference type="Pfam" id="PF00281">
    <property type="entry name" value="Ribosomal_L5"/>
    <property type="match status" value="1"/>
</dbReference>
<dbReference type="Pfam" id="PF00673">
    <property type="entry name" value="Ribosomal_L5_C"/>
    <property type="match status" value="1"/>
</dbReference>
<dbReference type="PIRSF" id="PIRSF002161">
    <property type="entry name" value="Ribosomal_L5"/>
    <property type="match status" value="1"/>
</dbReference>
<dbReference type="SUPFAM" id="SSF55282">
    <property type="entry name" value="RL5-like"/>
    <property type="match status" value="1"/>
</dbReference>
<dbReference type="PROSITE" id="PS00358">
    <property type="entry name" value="RIBOSOMAL_L5"/>
    <property type="match status" value="1"/>
</dbReference>
<keyword id="KW-0687">Ribonucleoprotein</keyword>
<keyword id="KW-0689">Ribosomal protein</keyword>
<keyword id="KW-0694">RNA-binding</keyword>
<keyword id="KW-0699">rRNA-binding</keyword>
<keyword id="KW-0820">tRNA-binding</keyword>
<comment type="function">
    <text evidence="1">This is one of the proteins that bind and probably mediate the attachment of the 5S RNA into the large ribosomal subunit, where it forms part of the central protuberance. In the 70S ribosome it contacts protein S13 of the 30S subunit (bridge B1b), connecting the 2 subunits; this bridge is implicated in subunit movement. Contacts the P site tRNA; the 5S rRNA and some of its associated proteins might help stabilize positioning of ribosome-bound tRNAs.</text>
</comment>
<comment type="subunit">
    <text evidence="1">Part of the 50S ribosomal subunit; part of the 5S rRNA/L5/L18/L25 subcomplex. Contacts the 5S rRNA and the P site tRNA. Forms a bridge to the 30S subunit in the 70S ribosome.</text>
</comment>
<comment type="similarity">
    <text evidence="1">Belongs to the universal ribosomal protein uL5 family.</text>
</comment>
<organism>
    <name type="scientific">Neisseria meningitidis serogroup C / serotype 2a (strain ATCC 700532 / DSM 15464 / FAM18)</name>
    <dbReference type="NCBI Taxonomy" id="272831"/>
    <lineage>
        <taxon>Bacteria</taxon>
        <taxon>Pseudomonadati</taxon>
        <taxon>Pseudomonadota</taxon>
        <taxon>Betaproteobacteria</taxon>
        <taxon>Neisseriales</taxon>
        <taxon>Neisseriaceae</taxon>
        <taxon>Neisseria</taxon>
    </lineage>
</organism>
<evidence type="ECO:0000255" key="1">
    <source>
        <dbReference type="HAMAP-Rule" id="MF_01333"/>
    </source>
</evidence>
<evidence type="ECO:0000305" key="2"/>
<feature type="chain" id="PRO_1000052782" description="Large ribosomal subunit protein uL5">
    <location>
        <begin position="1"/>
        <end position="179"/>
    </location>
</feature>
<reference key="1">
    <citation type="journal article" date="2007" name="PLoS Genet.">
        <title>Meningococcal genetic variation mechanisms viewed through comparative analysis of serogroup C strain FAM18.</title>
        <authorList>
            <person name="Bentley S.D."/>
            <person name="Vernikos G.S."/>
            <person name="Snyder L.A.S."/>
            <person name="Churcher C."/>
            <person name="Arrowsmith C."/>
            <person name="Chillingworth T."/>
            <person name="Cronin A."/>
            <person name="Davis P.H."/>
            <person name="Holroyd N.E."/>
            <person name="Jagels K."/>
            <person name="Maddison M."/>
            <person name="Moule S."/>
            <person name="Rabbinowitsch E."/>
            <person name="Sharp S."/>
            <person name="Unwin L."/>
            <person name="Whitehead S."/>
            <person name="Quail M.A."/>
            <person name="Achtman M."/>
            <person name="Barrell B.G."/>
            <person name="Saunders N.J."/>
            <person name="Parkhill J."/>
        </authorList>
    </citation>
    <scope>NUCLEOTIDE SEQUENCE [LARGE SCALE GENOMIC DNA]</scope>
    <source>
        <strain>ATCC 700532 / DSM 15464 / FAM18</strain>
    </source>
</reference>
<name>RL5_NEIMF</name>
<accession>A1KRI5</accession>
<proteinExistence type="inferred from homology"/>
<sequence>MARLREFYKETVVPELVKQFGYKSVMEVPRIEKITLNMGVGEAVADKKVMEHAVSDLEKIAGQKPVVTVARKSIAGFKIRDNYPVGCKVTLRRDQMFEFLDRLITIALPRVRDFRGVSGKSFDGRGNYNMGVREQIIFPEIEYDKIDALRGLNITITTTAKTDEEAKALLSLFKFPFKG</sequence>
<protein>
    <recommendedName>
        <fullName evidence="1">Large ribosomal subunit protein uL5</fullName>
    </recommendedName>
    <alternativeName>
        <fullName evidence="2">50S ribosomal protein L5</fullName>
    </alternativeName>
</protein>